<feature type="chain" id="PRO_0000098200" description="DNA-Binding protein G5P">
    <location>
        <begin position="1"/>
        <end position="144"/>
    </location>
</feature>
<feature type="region of interest" description="Disordered" evidence="2">
    <location>
        <begin position="106"/>
        <end position="144"/>
    </location>
</feature>
<feature type="compositionally biased region" description="Low complexity" evidence="2">
    <location>
        <begin position="108"/>
        <end position="133"/>
    </location>
</feature>
<feature type="compositionally biased region" description="Basic and acidic residues" evidence="2">
    <location>
        <begin position="134"/>
        <end position="144"/>
    </location>
</feature>
<feature type="sequence variant" description="Occasionally.">
    <location>
        <position position="1"/>
    </location>
</feature>
<feature type="sequence conflict" description="In Ref. 1; AA sequence." evidence="3" ref="1">
    <location>
        <position position="11"/>
    </location>
</feature>
<organismHost>
    <name type="scientific">Pseudomonas aeruginosa</name>
    <dbReference type="NCBI Taxonomy" id="287"/>
</organismHost>
<comment type="function">
    <text evidence="1">Binds to DNA in a highly cooperative manner without pronounced sequence specificity. During synthesis of the single-stranded (progeny) viral DNA, prevents the conversion into the double-stranded replicative form. G5P is displaced by the capsid protein G8P during phage assembly on the inner bacterial membrane (By similarity).</text>
</comment>
<comment type="subunit">
    <text evidence="1">Homodimer.</text>
</comment>
<comment type="similarity">
    <text evidence="3">Belongs to the inovirus G5P protein family.</text>
</comment>
<organism>
    <name type="scientific">Pseudomonas phage Pf1</name>
    <name type="common">Bacteriophage Pf1</name>
    <dbReference type="NCBI Taxonomy" id="2011081"/>
    <lineage>
        <taxon>Viruses</taxon>
        <taxon>Monodnaviria</taxon>
        <taxon>Loebvirae</taxon>
        <taxon>Hofneiviricota</taxon>
        <taxon>Faserviricetes</taxon>
        <taxon>Tubulavirales</taxon>
        <taxon>Inoviridae</taxon>
        <taxon>Primolicivirus</taxon>
    </lineage>
</organism>
<proteinExistence type="evidence at protein level"/>
<name>G5P_BPPF1</name>
<accession>P03671</accession>
<keyword id="KW-0903">Direct protein sequencing</keyword>
<keyword id="KW-0235">DNA replication</keyword>
<keyword id="KW-0238">DNA-binding</keyword>
<keyword id="KW-1185">Reference proteome</keyword>
<dbReference type="EMBL" id="X52107">
    <property type="protein sequence ID" value="CAA36328.1"/>
    <property type="molecule type" value="Genomic_DNA"/>
</dbReference>
<dbReference type="EMBL" id="V00605">
    <property type="protein sequence ID" value="CAA23866.1"/>
    <property type="molecule type" value="Genomic_DNA"/>
</dbReference>
<dbReference type="PIR" id="A04273">
    <property type="entry name" value="DDBPPF"/>
</dbReference>
<dbReference type="KEGG" id="vg:1260710"/>
<dbReference type="Proteomes" id="UP000002121">
    <property type="component" value="Genome"/>
</dbReference>
<dbReference type="GO" id="GO:0003677">
    <property type="term" value="F:DNA binding"/>
    <property type="evidence" value="ECO:0007669"/>
    <property type="project" value="UniProtKB-KW"/>
</dbReference>
<dbReference type="GO" id="GO:0006260">
    <property type="term" value="P:DNA replication"/>
    <property type="evidence" value="ECO:0007669"/>
    <property type="project" value="UniProtKB-KW"/>
</dbReference>
<sequence>MNMFATQGGVVELWVTKTDTYTSTKTGEIYASVQSIAPIPEGARGNAKGFEISEYNIEPTLLDAIVFEGQPVLCKFASVVRPTQDRFGRITNTQVLVDLLAVGGKPMAPTAQAPARPQAQAQAPRPAQQPQGQDKQDKSPDAKA</sequence>
<protein>
    <recommendedName>
        <fullName>DNA-Binding protein G5P</fullName>
        <shortName>G5P</shortName>
    </recommendedName>
    <alternativeName>
        <fullName>GPV</fullName>
    </alternativeName>
    <alternativeName>
        <fullName>Single-stranded DNA-binding protein</fullName>
    </alternativeName>
</protein>
<reference key="1">
    <citation type="journal article" date="1982" name="EMBO J.">
        <title>The DNA-binding protein of Pf1 filamentous bacteriophage: amino-acid sequence and structure of the gene.</title>
        <authorList>
            <person name="Maeda K."/>
            <person name="Kneale G.G."/>
            <person name="Tsugita A."/>
            <person name="Short N.J."/>
            <person name="Perham R.N."/>
            <person name="Hill D.F."/>
            <person name="Petersen G.B."/>
        </authorList>
    </citation>
    <scope>PROTEIN SEQUENCE</scope>
    <scope>NUCLEOTIDE SEQUENCE [GENOMIC DNA]</scope>
</reference>
<reference key="2">
    <citation type="journal article" date="1991" name="J. Mol. Biol.">
        <title>DNA sequence of the filamentous bacteriophage Pf1.</title>
        <authorList>
            <person name="Hill D.F."/>
            <person name="Short N.J."/>
            <person name="Perham R.N."/>
            <person name="Petersen G.B."/>
        </authorList>
    </citation>
    <scope>NUCLEOTIDE SEQUENCE [GENOMIC DNA]</scope>
    <source>
        <strain>ATCC 25102-B1 / pf</strain>
    </source>
</reference>
<evidence type="ECO:0000250" key="1"/>
<evidence type="ECO:0000256" key="2">
    <source>
        <dbReference type="SAM" id="MobiDB-lite"/>
    </source>
</evidence>
<evidence type="ECO:0000305" key="3"/>
<gene>
    <name type="primary">V</name>
</gene>